<accession>Q8ZIW4</accession>
<accession>Q0WJT9</accession>
<gene>
    <name evidence="1" type="primary">mutL</name>
    <name type="ordered locus">YPO0371</name>
    <name type="ordered locus">y0628</name>
    <name type="ordered locus">YP_0527</name>
</gene>
<feature type="chain" id="PRO_0000177998" description="DNA mismatch repair protein MutL">
    <location>
        <begin position="1"/>
        <end position="635"/>
    </location>
</feature>
<feature type="region of interest" description="Disordered" evidence="2">
    <location>
        <begin position="359"/>
        <end position="399"/>
    </location>
</feature>
<feature type="compositionally biased region" description="Low complexity" evidence="2">
    <location>
        <begin position="364"/>
        <end position="377"/>
    </location>
</feature>
<feature type="compositionally biased region" description="Basic and acidic residues" evidence="2">
    <location>
        <begin position="378"/>
        <end position="399"/>
    </location>
</feature>
<protein>
    <recommendedName>
        <fullName evidence="1">DNA mismatch repair protein MutL</fullName>
    </recommendedName>
</protein>
<evidence type="ECO:0000255" key="1">
    <source>
        <dbReference type="HAMAP-Rule" id="MF_00149"/>
    </source>
</evidence>
<evidence type="ECO:0000256" key="2">
    <source>
        <dbReference type="SAM" id="MobiDB-lite"/>
    </source>
</evidence>
<dbReference type="EMBL" id="AL590842">
    <property type="protein sequence ID" value="CAL19053.1"/>
    <property type="molecule type" value="Genomic_DNA"/>
</dbReference>
<dbReference type="EMBL" id="AE009952">
    <property type="protein sequence ID" value="AAM84216.1"/>
    <property type="molecule type" value="Genomic_DNA"/>
</dbReference>
<dbReference type="EMBL" id="AE017042">
    <property type="protein sequence ID" value="AAS60797.1"/>
    <property type="molecule type" value="Genomic_DNA"/>
</dbReference>
<dbReference type="PIR" id="AC0046">
    <property type="entry name" value="AC0046"/>
</dbReference>
<dbReference type="RefSeq" id="WP_002209148.1">
    <property type="nucleotide sequence ID" value="NZ_WUCM01000083.1"/>
</dbReference>
<dbReference type="RefSeq" id="YP_002345449.1">
    <property type="nucleotide sequence ID" value="NC_003143.1"/>
</dbReference>
<dbReference type="SMR" id="Q8ZIW4"/>
<dbReference type="STRING" id="214092.YPO0371"/>
<dbReference type="PaxDb" id="214092-YPO0371"/>
<dbReference type="EnsemblBacteria" id="AAS60797">
    <property type="protein sequence ID" value="AAS60797"/>
    <property type="gene ID" value="YP_0527"/>
</dbReference>
<dbReference type="GeneID" id="57974236"/>
<dbReference type="KEGG" id="ype:YPO0371"/>
<dbReference type="KEGG" id="ypk:y0628"/>
<dbReference type="KEGG" id="ypm:YP_0527"/>
<dbReference type="PATRIC" id="fig|214092.21.peg.608"/>
<dbReference type="eggNOG" id="COG0323">
    <property type="taxonomic scope" value="Bacteria"/>
</dbReference>
<dbReference type="HOGENOM" id="CLU_004131_5_1_6"/>
<dbReference type="OMA" id="ATQEQAW"/>
<dbReference type="OrthoDB" id="9763467at2"/>
<dbReference type="Proteomes" id="UP000000815">
    <property type="component" value="Chromosome"/>
</dbReference>
<dbReference type="Proteomes" id="UP000001019">
    <property type="component" value="Chromosome"/>
</dbReference>
<dbReference type="Proteomes" id="UP000002490">
    <property type="component" value="Chromosome"/>
</dbReference>
<dbReference type="GO" id="GO:0032300">
    <property type="term" value="C:mismatch repair complex"/>
    <property type="evidence" value="ECO:0000318"/>
    <property type="project" value="GO_Central"/>
</dbReference>
<dbReference type="GO" id="GO:0005524">
    <property type="term" value="F:ATP binding"/>
    <property type="evidence" value="ECO:0007669"/>
    <property type="project" value="InterPro"/>
</dbReference>
<dbReference type="GO" id="GO:0016887">
    <property type="term" value="F:ATP hydrolysis activity"/>
    <property type="evidence" value="ECO:0000318"/>
    <property type="project" value="GO_Central"/>
</dbReference>
<dbReference type="GO" id="GO:0140664">
    <property type="term" value="F:ATP-dependent DNA damage sensor activity"/>
    <property type="evidence" value="ECO:0007669"/>
    <property type="project" value="InterPro"/>
</dbReference>
<dbReference type="GO" id="GO:0030983">
    <property type="term" value="F:mismatched DNA binding"/>
    <property type="evidence" value="ECO:0007669"/>
    <property type="project" value="InterPro"/>
</dbReference>
<dbReference type="GO" id="GO:0006298">
    <property type="term" value="P:mismatch repair"/>
    <property type="evidence" value="ECO:0000318"/>
    <property type="project" value="GO_Central"/>
</dbReference>
<dbReference type="CDD" id="cd16926">
    <property type="entry name" value="HATPase_MutL-MLH-PMS-like"/>
    <property type="match status" value="1"/>
</dbReference>
<dbReference type="CDD" id="cd03482">
    <property type="entry name" value="MutL_Trans_MutL"/>
    <property type="match status" value="1"/>
</dbReference>
<dbReference type="FunFam" id="3.30.230.10:FF:000013">
    <property type="entry name" value="DNA mismatch repair endonuclease MutL"/>
    <property type="match status" value="1"/>
</dbReference>
<dbReference type="FunFam" id="3.30.565.10:FF:000003">
    <property type="entry name" value="DNA mismatch repair endonuclease MutL"/>
    <property type="match status" value="1"/>
</dbReference>
<dbReference type="FunFam" id="3.30.1370.100:FF:000002">
    <property type="entry name" value="DNA mismatch repair protein MutL"/>
    <property type="match status" value="1"/>
</dbReference>
<dbReference type="Gene3D" id="3.30.230.10">
    <property type="match status" value="1"/>
</dbReference>
<dbReference type="Gene3D" id="3.30.565.10">
    <property type="entry name" value="Histidine kinase-like ATPase, C-terminal domain"/>
    <property type="match status" value="1"/>
</dbReference>
<dbReference type="Gene3D" id="3.30.1540.20">
    <property type="entry name" value="MutL, C-terminal domain, dimerisation subdomain"/>
    <property type="match status" value="1"/>
</dbReference>
<dbReference type="Gene3D" id="3.30.1370.100">
    <property type="entry name" value="MutL, C-terminal domain, regulatory subdomain"/>
    <property type="match status" value="1"/>
</dbReference>
<dbReference type="HAMAP" id="MF_00149">
    <property type="entry name" value="DNA_mis_repair"/>
    <property type="match status" value="1"/>
</dbReference>
<dbReference type="InterPro" id="IPR014762">
    <property type="entry name" value="DNA_mismatch_repair_CS"/>
</dbReference>
<dbReference type="InterPro" id="IPR020667">
    <property type="entry name" value="DNA_mismatch_repair_MutL"/>
</dbReference>
<dbReference type="InterPro" id="IPR013507">
    <property type="entry name" value="DNA_mismatch_S5_2-like"/>
</dbReference>
<dbReference type="InterPro" id="IPR036890">
    <property type="entry name" value="HATPase_C_sf"/>
</dbReference>
<dbReference type="InterPro" id="IPR002099">
    <property type="entry name" value="MutL/Mlh/PMS"/>
</dbReference>
<dbReference type="InterPro" id="IPR038973">
    <property type="entry name" value="MutL/Mlh/Pms-like"/>
</dbReference>
<dbReference type="InterPro" id="IPR014790">
    <property type="entry name" value="MutL_C"/>
</dbReference>
<dbReference type="InterPro" id="IPR042120">
    <property type="entry name" value="MutL_C_dimsub"/>
</dbReference>
<dbReference type="InterPro" id="IPR042121">
    <property type="entry name" value="MutL_C_regsub"/>
</dbReference>
<dbReference type="InterPro" id="IPR037198">
    <property type="entry name" value="MutL_C_sf"/>
</dbReference>
<dbReference type="InterPro" id="IPR020568">
    <property type="entry name" value="Ribosomal_Su5_D2-typ_SF"/>
</dbReference>
<dbReference type="InterPro" id="IPR014721">
    <property type="entry name" value="Ribsml_uS5_D2-typ_fold_subgr"/>
</dbReference>
<dbReference type="NCBIfam" id="TIGR00585">
    <property type="entry name" value="mutl"/>
    <property type="match status" value="1"/>
</dbReference>
<dbReference type="NCBIfam" id="NF000948">
    <property type="entry name" value="PRK00095.1-1"/>
    <property type="match status" value="1"/>
</dbReference>
<dbReference type="PANTHER" id="PTHR10073">
    <property type="entry name" value="DNA MISMATCH REPAIR PROTEIN MLH, PMS, MUTL"/>
    <property type="match status" value="1"/>
</dbReference>
<dbReference type="PANTHER" id="PTHR10073:SF12">
    <property type="entry name" value="DNA MISMATCH REPAIR PROTEIN MLH1"/>
    <property type="match status" value="1"/>
</dbReference>
<dbReference type="Pfam" id="PF01119">
    <property type="entry name" value="DNA_mis_repair"/>
    <property type="match status" value="1"/>
</dbReference>
<dbReference type="Pfam" id="PF13589">
    <property type="entry name" value="HATPase_c_3"/>
    <property type="match status" value="1"/>
</dbReference>
<dbReference type="Pfam" id="PF08676">
    <property type="entry name" value="MutL_C"/>
    <property type="match status" value="1"/>
</dbReference>
<dbReference type="SMART" id="SM01340">
    <property type="entry name" value="DNA_mis_repair"/>
    <property type="match status" value="1"/>
</dbReference>
<dbReference type="SMART" id="SM00853">
    <property type="entry name" value="MutL_C"/>
    <property type="match status" value="1"/>
</dbReference>
<dbReference type="SUPFAM" id="SSF55874">
    <property type="entry name" value="ATPase domain of HSP90 chaperone/DNA topoisomerase II/histidine kinase"/>
    <property type="match status" value="1"/>
</dbReference>
<dbReference type="SUPFAM" id="SSF118116">
    <property type="entry name" value="DNA mismatch repair protein MutL"/>
    <property type="match status" value="1"/>
</dbReference>
<dbReference type="SUPFAM" id="SSF54211">
    <property type="entry name" value="Ribosomal protein S5 domain 2-like"/>
    <property type="match status" value="1"/>
</dbReference>
<dbReference type="PROSITE" id="PS00058">
    <property type="entry name" value="DNA_MISMATCH_REPAIR_1"/>
    <property type="match status" value="1"/>
</dbReference>
<sequence>MPIQILPPQLANQIAAGEVVERPASVVKELVENSLDAGATRIDIDIERGGAKLIRIRDNGCGISKDDLALALARHATSKISSLEDLEAILSMGFRGEALASISSVSRLILTSRTAEQSEAWQAYAEGRDMAVTIKPAAHPVGSTLEVLDLFYNTPARRKFMRTEKTEFGHIDEVVRRIALARFDVAINLNHNGKLIRQYRAAPDPAQHERRLASICGPAFLQHALAIAWQHGDLNIHGWVADPAASHTLSEMQYCYVNNRMMRDRLINHAIRQAYQDRLNDAQQPAYVLYLDIDPHQVDVNVHPAKHEVRFHQARLVHDFIYQAVTAVLQQTNAPILNISEEGEVDAPRWQQENRVAAGTNKYAQPEAAKSSAAEQAVARERSSARERAAPAYKEDHPYQKQQGELYRQLLQPSAAAKPATSPAAIPASSVSSPSIPVQRITQAEEPLHGDNYSFGRVLTVFPPCYALIEYQGGVALLSLAVAERWLKQAQLSPPEEGLRPQPLLIPLKITLDKNEIAACQNHEKLLITMGIELSVEQGRATLRAVSLPLRQQNLQKLIPELLGYLSQHEEISPDTLATWLARHLGSEHEVWNVSQAIQLLTEVERLCPQLVQSPPAGLLQPIDIKAALATLTHE</sequence>
<organism>
    <name type="scientific">Yersinia pestis</name>
    <dbReference type="NCBI Taxonomy" id="632"/>
    <lineage>
        <taxon>Bacteria</taxon>
        <taxon>Pseudomonadati</taxon>
        <taxon>Pseudomonadota</taxon>
        <taxon>Gammaproteobacteria</taxon>
        <taxon>Enterobacterales</taxon>
        <taxon>Yersiniaceae</taxon>
        <taxon>Yersinia</taxon>
    </lineage>
</organism>
<proteinExistence type="inferred from homology"/>
<keyword id="KW-0227">DNA damage</keyword>
<keyword id="KW-0234">DNA repair</keyword>
<keyword id="KW-1185">Reference proteome</keyword>
<comment type="function">
    <text evidence="1">This protein is involved in the repair of mismatches in DNA. It is required for dam-dependent methyl-directed DNA mismatch repair. May act as a 'molecular matchmaker', a protein that promotes the formation of a stable complex between two or more DNA-binding proteins in an ATP-dependent manner without itself being part of a final effector complex.</text>
</comment>
<comment type="similarity">
    <text evidence="1">Belongs to the DNA mismatch repair MutL/HexB family.</text>
</comment>
<name>MUTL_YERPE</name>
<reference key="1">
    <citation type="journal article" date="2001" name="Nature">
        <title>Genome sequence of Yersinia pestis, the causative agent of plague.</title>
        <authorList>
            <person name="Parkhill J."/>
            <person name="Wren B.W."/>
            <person name="Thomson N.R."/>
            <person name="Titball R.W."/>
            <person name="Holden M.T.G."/>
            <person name="Prentice M.B."/>
            <person name="Sebaihia M."/>
            <person name="James K.D."/>
            <person name="Churcher C.M."/>
            <person name="Mungall K.L."/>
            <person name="Baker S."/>
            <person name="Basham D."/>
            <person name="Bentley S.D."/>
            <person name="Brooks K."/>
            <person name="Cerdeno-Tarraga A.-M."/>
            <person name="Chillingworth T."/>
            <person name="Cronin A."/>
            <person name="Davies R.M."/>
            <person name="Davis P."/>
            <person name="Dougan G."/>
            <person name="Feltwell T."/>
            <person name="Hamlin N."/>
            <person name="Holroyd S."/>
            <person name="Jagels K."/>
            <person name="Karlyshev A.V."/>
            <person name="Leather S."/>
            <person name="Moule S."/>
            <person name="Oyston P.C.F."/>
            <person name="Quail M.A."/>
            <person name="Rutherford K.M."/>
            <person name="Simmonds M."/>
            <person name="Skelton J."/>
            <person name="Stevens K."/>
            <person name="Whitehead S."/>
            <person name="Barrell B.G."/>
        </authorList>
    </citation>
    <scope>NUCLEOTIDE SEQUENCE [LARGE SCALE GENOMIC DNA]</scope>
    <source>
        <strain>CO-92 / Biovar Orientalis</strain>
    </source>
</reference>
<reference key="2">
    <citation type="journal article" date="2002" name="J. Bacteriol.">
        <title>Genome sequence of Yersinia pestis KIM.</title>
        <authorList>
            <person name="Deng W."/>
            <person name="Burland V."/>
            <person name="Plunkett G. III"/>
            <person name="Boutin A."/>
            <person name="Mayhew G.F."/>
            <person name="Liss P."/>
            <person name="Perna N.T."/>
            <person name="Rose D.J."/>
            <person name="Mau B."/>
            <person name="Zhou S."/>
            <person name="Schwartz D.C."/>
            <person name="Fetherston J.D."/>
            <person name="Lindler L.E."/>
            <person name="Brubaker R.R."/>
            <person name="Plano G.V."/>
            <person name="Straley S.C."/>
            <person name="McDonough K.A."/>
            <person name="Nilles M.L."/>
            <person name="Matson J.S."/>
            <person name="Blattner F.R."/>
            <person name="Perry R.D."/>
        </authorList>
    </citation>
    <scope>NUCLEOTIDE SEQUENCE [LARGE SCALE GENOMIC DNA]</scope>
    <source>
        <strain>KIM10+ / Biovar Mediaevalis</strain>
    </source>
</reference>
<reference key="3">
    <citation type="journal article" date="2004" name="DNA Res.">
        <title>Complete genome sequence of Yersinia pestis strain 91001, an isolate avirulent to humans.</title>
        <authorList>
            <person name="Song Y."/>
            <person name="Tong Z."/>
            <person name="Wang J."/>
            <person name="Wang L."/>
            <person name="Guo Z."/>
            <person name="Han Y."/>
            <person name="Zhang J."/>
            <person name="Pei D."/>
            <person name="Zhou D."/>
            <person name="Qin H."/>
            <person name="Pang X."/>
            <person name="Han Y."/>
            <person name="Zhai J."/>
            <person name="Li M."/>
            <person name="Cui B."/>
            <person name="Qi Z."/>
            <person name="Jin L."/>
            <person name="Dai R."/>
            <person name="Chen F."/>
            <person name="Li S."/>
            <person name="Ye C."/>
            <person name="Du Z."/>
            <person name="Lin W."/>
            <person name="Wang J."/>
            <person name="Yu J."/>
            <person name="Yang H."/>
            <person name="Wang J."/>
            <person name="Huang P."/>
            <person name="Yang R."/>
        </authorList>
    </citation>
    <scope>NUCLEOTIDE SEQUENCE [LARGE SCALE GENOMIC DNA]</scope>
    <source>
        <strain>91001 / Biovar Mediaevalis</strain>
    </source>
</reference>